<proteinExistence type="inferred from homology"/>
<gene>
    <name evidence="1" type="primary">aroB</name>
    <name type="ordered locus">LHK_02957</name>
</gene>
<dbReference type="EC" id="4.2.3.4" evidence="1"/>
<dbReference type="EMBL" id="CP001154">
    <property type="protein sequence ID" value="ACO75935.1"/>
    <property type="molecule type" value="Genomic_DNA"/>
</dbReference>
<dbReference type="RefSeq" id="WP_012698398.1">
    <property type="nucleotide sequence ID" value="NC_012559.1"/>
</dbReference>
<dbReference type="SMR" id="C1D4Z4"/>
<dbReference type="STRING" id="557598.LHK_02957"/>
<dbReference type="GeneID" id="75108182"/>
<dbReference type="KEGG" id="lhk:LHK_02957"/>
<dbReference type="eggNOG" id="COG0337">
    <property type="taxonomic scope" value="Bacteria"/>
</dbReference>
<dbReference type="HOGENOM" id="CLU_001201_0_2_4"/>
<dbReference type="UniPathway" id="UPA00053">
    <property type="reaction ID" value="UER00085"/>
</dbReference>
<dbReference type="Proteomes" id="UP000002010">
    <property type="component" value="Chromosome"/>
</dbReference>
<dbReference type="GO" id="GO:0005737">
    <property type="term" value="C:cytoplasm"/>
    <property type="evidence" value="ECO:0007669"/>
    <property type="project" value="UniProtKB-SubCell"/>
</dbReference>
<dbReference type="GO" id="GO:0003856">
    <property type="term" value="F:3-dehydroquinate synthase activity"/>
    <property type="evidence" value="ECO:0007669"/>
    <property type="project" value="UniProtKB-UniRule"/>
</dbReference>
<dbReference type="GO" id="GO:0046872">
    <property type="term" value="F:metal ion binding"/>
    <property type="evidence" value="ECO:0007669"/>
    <property type="project" value="UniProtKB-KW"/>
</dbReference>
<dbReference type="GO" id="GO:0000166">
    <property type="term" value="F:nucleotide binding"/>
    <property type="evidence" value="ECO:0007669"/>
    <property type="project" value="UniProtKB-KW"/>
</dbReference>
<dbReference type="GO" id="GO:0008652">
    <property type="term" value="P:amino acid biosynthetic process"/>
    <property type="evidence" value="ECO:0007669"/>
    <property type="project" value="UniProtKB-KW"/>
</dbReference>
<dbReference type="GO" id="GO:0009073">
    <property type="term" value="P:aromatic amino acid family biosynthetic process"/>
    <property type="evidence" value="ECO:0007669"/>
    <property type="project" value="UniProtKB-KW"/>
</dbReference>
<dbReference type="GO" id="GO:0009423">
    <property type="term" value="P:chorismate biosynthetic process"/>
    <property type="evidence" value="ECO:0007669"/>
    <property type="project" value="UniProtKB-UniRule"/>
</dbReference>
<dbReference type="CDD" id="cd08195">
    <property type="entry name" value="DHQS"/>
    <property type="match status" value="1"/>
</dbReference>
<dbReference type="FunFam" id="3.40.50.1970:FF:000001">
    <property type="entry name" value="3-dehydroquinate synthase"/>
    <property type="match status" value="1"/>
</dbReference>
<dbReference type="Gene3D" id="3.40.50.1970">
    <property type="match status" value="1"/>
</dbReference>
<dbReference type="Gene3D" id="1.20.1090.10">
    <property type="entry name" value="Dehydroquinate synthase-like - alpha domain"/>
    <property type="match status" value="1"/>
</dbReference>
<dbReference type="HAMAP" id="MF_00110">
    <property type="entry name" value="DHQ_synthase"/>
    <property type="match status" value="1"/>
</dbReference>
<dbReference type="InterPro" id="IPR050071">
    <property type="entry name" value="Dehydroquinate_synthase"/>
</dbReference>
<dbReference type="InterPro" id="IPR016037">
    <property type="entry name" value="DHQ_synth_AroB"/>
</dbReference>
<dbReference type="InterPro" id="IPR030963">
    <property type="entry name" value="DHQ_synth_fam"/>
</dbReference>
<dbReference type="InterPro" id="IPR030960">
    <property type="entry name" value="DHQS/DOIS_N"/>
</dbReference>
<dbReference type="InterPro" id="IPR056179">
    <property type="entry name" value="DHQS_C"/>
</dbReference>
<dbReference type="NCBIfam" id="TIGR01357">
    <property type="entry name" value="aroB"/>
    <property type="match status" value="1"/>
</dbReference>
<dbReference type="PANTHER" id="PTHR43622">
    <property type="entry name" value="3-DEHYDROQUINATE SYNTHASE"/>
    <property type="match status" value="1"/>
</dbReference>
<dbReference type="PANTHER" id="PTHR43622:SF7">
    <property type="entry name" value="3-DEHYDROQUINATE SYNTHASE, CHLOROPLASTIC"/>
    <property type="match status" value="1"/>
</dbReference>
<dbReference type="Pfam" id="PF01761">
    <property type="entry name" value="DHQ_synthase"/>
    <property type="match status" value="1"/>
</dbReference>
<dbReference type="Pfam" id="PF24621">
    <property type="entry name" value="DHQS_C"/>
    <property type="match status" value="1"/>
</dbReference>
<dbReference type="PIRSF" id="PIRSF001455">
    <property type="entry name" value="DHQ_synth"/>
    <property type="match status" value="1"/>
</dbReference>
<dbReference type="SUPFAM" id="SSF56796">
    <property type="entry name" value="Dehydroquinate synthase-like"/>
    <property type="match status" value="1"/>
</dbReference>
<accession>C1D4Z4</accession>
<comment type="function">
    <text evidence="1">Catalyzes the conversion of 3-deoxy-D-arabino-heptulosonate 7-phosphate (DAHP) to dehydroquinate (DHQ).</text>
</comment>
<comment type="catalytic activity">
    <reaction evidence="1">
        <text>7-phospho-2-dehydro-3-deoxy-D-arabino-heptonate = 3-dehydroquinate + phosphate</text>
        <dbReference type="Rhea" id="RHEA:21968"/>
        <dbReference type="ChEBI" id="CHEBI:32364"/>
        <dbReference type="ChEBI" id="CHEBI:43474"/>
        <dbReference type="ChEBI" id="CHEBI:58394"/>
        <dbReference type="EC" id="4.2.3.4"/>
    </reaction>
</comment>
<comment type="cofactor">
    <cofactor evidence="1">
        <name>Co(2+)</name>
        <dbReference type="ChEBI" id="CHEBI:48828"/>
    </cofactor>
    <cofactor evidence="1">
        <name>Zn(2+)</name>
        <dbReference type="ChEBI" id="CHEBI:29105"/>
    </cofactor>
    <text evidence="1">Binds 1 divalent metal cation per subunit. Can use either Co(2+) or Zn(2+).</text>
</comment>
<comment type="cofactor">
    <cofactor evidence="1">
        <name>NAD(+)</name>
        <dbReference type="ChEBI" id="CHEBI:57540"/>
    </cofactor>
</comment>
<comment type="pathway">
    <text evidence="1">Metabolic intermediate biosynthesis; chorismate biosynthesis; chorismate from D-erythrose 4-phosphate and phosphoenolpyruvate: step 2/7.</text>
</comment>
<comment type="subcellular location">
    <subcellularLocation>
        <location evidence="1">Cytoplasm</location>
    </subcellularLocation>
</comment>
<comment type="similarity">
    <text evidence="1">Belongs to the sugar phosphate cyclases superfamily. Dehydroquinate synthase family.</text>
</comment>
<sequence length="362" mass="39230">MITLDLTLPDCRYPIHIGQGVLDRAGELVAPHLPQSRALIVTNDVVAPLYLERCRQSLQAAGVCTEVVILPDGEAHKDWQTLNCIFDALIAMRAERKTALVALGGGVIGDMTGFAAACWQRGAPFVQIPTTLLAQVDSSVGGKTAINHPAGKNMIGAFWQPRVVLADLDVLDTLPEREFSAGLAEVYKYGLIDNLPFFEWCEQQVPALLARDKAALAHAVEVSCRMKAAIVGQDEKEQGVRALLNLGHTFGHAIEAGLGFGVWLHGEAVAAGMVLAAETAQEMGQLESADVLRIRALLLQSNLPVVPPAWPLATWLELMGHDKKVEGGQLRFVLPDRLGHCRLESGVGEKYLEKVLIHNIRD</sequence>
<name>AROB_LARHH</name>
<keyword id="KW-0028">Amino-acid biosynthesis</keyword>
<keyword id="KW-0057">Aromatic amino acid biosynthesis</keyword>
<keyword id="KW-0170">Cobalt</keyword>
<keyword id="KW-0963">Cytoplasm</keyword>
<keyword id="KW-0456">Lyase</keyword>
<keyword id="KW-0479">Metal-binding</keyword>
<keyword id="KW-0520">NAD</keyword>
<keyword id="KW-0547">Nucleotide-binding</keyword>
<keyword id="KW-1185">Reference proteome</keyword>
<keyword id="KW-0862">Zinc</keyword>
<evidence type="ECO:0000255" key="1">
    <source>
        <dbReference type="HAMAP-Rule" id="MF_00110"/>
    </source>
</evidence>
<reference key="1">
    <citation type="journal article" date="2009" name="PLoS Genet.">
        <title>The complete genome and proteome of Laribacter hongkongensis reveal potential mechanisms for adaptations to different temperatures and habitats.</title>
        <authorList>
            <person name="Woo P.C.Y."/>
            <person name="Lau S.K.P."/>
            <person name="Tse H."/>
            <person name="Teng J.L.L."/>
            <person name="Curreem S.O."/>
            <person name="Tsang A.K.L."/>
            <person name="Fan R.Y.Y."/>
            <person name="Wong G.K.M."/>
            <person name="Huang Y."/>
            <person name="Loman N.J."/>
            <person name="Snyder L.A.S."/>
            <person name="Cai J.J."/>
            <person name="Huang J.-D."/>
            <person name="Mak W."/>
            <person name="Pallen M.J."/>
            <person name="Lok S."/>
            <person name="Yuen K.-Y."/>
        </authorList>
    </citation>
    <scope>NUCLEOTIDE SEQUENCE [LARGE SCALE GENOMIC DNA]</scope>
    <source>
        <strain>HLHK9</strain>
    </source>
</reference>
<organism>
    <name type="scientific">Laribacter hongkongensis (strain HLHK9)</name>
    <dbReference type="NCBI Taxonomy" id="557598"/>
    <lineage>
        <taxon>Bacteria</taxon>
        <taxon>Pseudomonadati</taxon>
        <taxon>Pseudomonadota</taxon>
        <taxon>Betaproteobacteria</taxon>
        <taxon>Neisseriales</taxon>
        <taxon>Aquaspirillaceae</taxon>
        <taxon>Laribacter</taxon>
    </lineage>
</organism>
<feature type="chain" id="PRO_1000119083" description="3-dehydroquinate synthase">
    <location>
        <begin position="1"/>
        <end position="362"/>
    </location>
</feature>
<feature type="binding site" evidence="1">
    <location>
        <begin position="72"/>
        <end position="77"/>
    </location>
    <ligand>
        <name>NAD(+)</name>
        <dbReference type="ChEBI" id="CHEBI:57540"/>
    </ligand>
</feature>
<feature type="binding site" evidence="1">
    <location>
        <begin position="106"/>
        <end position="110"/>
    </location>
    <ligand>
        <name>NAD(+)</name>
        <dbReference type="ChEBI" id="CHEBI:57540"/>
    </ligand>
</feature>
<feature type="binding site" evidence="1">
    <location>
        <begin position="130"/>
        <end position="131"/>
    </location>
    <ligand>
        <name>NAD(+)</name>
        <dbReference type="ChEBI" id="CHEBI:57540"/>
    </ligand>
</feature>
<feature type="binding site" evidence="1">
    <location>
        <position position="143"/>
    </location>
    <ligand>
        <name>NAD(+)</name>
        <dbReference type="ChEBI" id="CHEBI:57540"/>
    </ligand>
</feature>
<feature type="binding site" evidence="1">
    <location>
        <position position="152"/>
    </location>
    <ligand>
        <name>NAD(+)</name>
        <dbReference type="ChEBI" id="CHEBI:57540"/>
    </ligand>
</feature>
<feature type="binding site" evidence="1">
    <location>
        <position position="185"/>
    </location>
    <ligand>
        <name>Zn(2+)</name>
        <dbReference type="ChEBI" id="CHEBI:29105"/>
    </ligand>
</feature>
<feature type="binding site" evidence="1">
    <location>
        <position position="248"/>
    </location>
    <ligand>
        <name>Zn(2+)</name>
        <dbReference type="ChEBI" id="CHEBI:29105"/>
    </ligand>
</feature>
<feature type="binding site" evidence="1">
    <location>
        <position position="265"/>
    </location>
    <ligand>
        <name>Zn(2+)</name>
        <dbReference type="ChEBI" id="CHEBI:29105"/>
    </ligand>
</feature>
<protein>
    <recommendedName>
        <fullName evidence="1">3-dehydroquinate synthase</fullName>
        <shortName evidence="1">DHQS</shortName>
        <ecNumber evidence="1">4.2.3.4</ecNumber>
    </recommendedName>
</protein>